<proteinExistence type="inferred from homology"/>
<accession>A9MF31</accession>
<gene>
    <name evidence="1" type="primary">surE</name>
    <name type="ordered locus">SARI_00029</name>
</gene>
<evidence type="ECO:0000255" key="1">
    <source>
        <dbReference type="HAMAP-Rule" id="MF_00060"/>
    </source>
</evidence>
<comment type="function">
    <text evidence="1">Nucleotidase with a broad substrate specificity as it can dephosphorylate various ribo- and deoxyribonucleoside 5'-monophosphates and ribonucleoside 3'-monophosphates with highest affinity to 3'-AMP. Also hydrolyzes polyphosphate (exopolyphosphatase activity) with the preference for short-chain-length substrates (P20-25). Might be involved in the regulation of dNTP and NTP pools, and in the turnover of 3'-mononucleotides produced by numerous intracellular RNases (T1, T2, and F) during the degradation of various RNAs.</text>
</comment>
<comment type="catalytic activity">
    <reaction evidence="1">
        <text>a ribonucleoside 5'-phosphate + H2O = a ribonucleoside + phosphate</text>
        <dbReference type="Rhea" id="RHEA:12484"/>
        <dbReference type="ChEBI" id="CHEBI:15377"/>
        <dbReference type="ChEBI" id="CHEBI:18254"/>
        <dbReference type="ChEBI" id="CHEBI:43474"/>
        <dbReference type="ChEBI" id="CHEBI:58043"/>
        <dbReference type="EC" id="3.1.3.5"/>
    </reaction>
</comment>
<comment type="catalytic activity">
    <reaction evidence="1">
        <text>a ribonucleoside 3'-phosphate + H2O = a ribonucleoside + phosphate</text>
        <dbReference type="Rhea" id="RHEA:10144"/>
        <dbReference type="ChEBI" id="CHEBI:13197"/>
        <dbReference type="ChEBI" id="CHEBI:15377"/>
        <dbReference type="ChEBI" id="CHEBI:18254"/>
        <dbReference type="ChEBI" id="CHEBI:43474"/>
        <dbReference type="EC" id="3.1.3.6"/>
    </reaction>
</comment>
<comment type="catalytic activity">
    <reaction evidence="1">
        <text>[phosphate](n) + H2O = [phosphate](n-1) + phosphate + H(+)</text>
        <dbReference type="Rhea" id="RHEA:21528"/>
        <dbReference type="Rhea" id="RHEA-COMP:9859"/>
        <dbReference type="Rhea" id="RHEA-COMP:14279"/>
        <dbReference type="ChEBI" id="CHEBI:15377"/>
        <dbReference type="ChEBI" id="CHEBI:15378"/>
        <dbReference type="ChEBI" id="CHEBI:16838"/>
        <dbReference type="ChEBI" id="CHEBI:43474"/>
        <dbReference type="EC" id="3.6.1.11"/>
    </reaction>
</comment>
<comment type="cofactor">
    <cofactor evidence="1">
        <name>a divalent metal cation</name>
        <dbReference type="ChEBI" id="CHEBI:60240"/>
    </cofactor>
    <text evidence="1">Binds 1 divalent metal cation per subunit.</text>
</comment>
<comment type="subcellular location">
    <subcellularLocation>
        <location evidence="1">Cytoplasm</location>
    </subcellularLocation>
</comment>
<comment type="similarity">
    <text evidence="1">Belongs to the SurE nucleotidase family.</text>
</comment>
<feature type="chain" id="PRO_1000075038" description="5'/3'-nucleotidase SurE">
    <location>
        <begin position="1"/>
        <end position="253"/>
    </location>
</feature>
<feature type="binding site" evidence="1">
    <location>
        <position position="8"/>
    </location>
    <ligand>
        <name>a divalent metal cation</name>
        <dbReference type="ChEBI" id="CHEBI:60240"/>
    </ligand>
</feature>
<feature type="binding site" evidence="1">
    <location>
        <position position="9"/>
    </location>
    <ligand>
        <name>a divalent metal cation</name>
        <dbReference type="ChEBI" id="CHEBI:60240"/>
    </ligand>
</feature>
<feature type="binding site" evidence="1">
    <location>
        <position position="39"/>
    </location>
    <ligand>
        <name>a divalent metal cation</name>
        <dbReference type="ChEBI" id="CHEBI:60240"/>
    </ligand>
</feature>
<feature type="binding site" evidence="1">
    <location>
        <position position="92"/>
    </location>
    <ligand>
        <name>a divalent metal cation</name>
        <dbReference type="ChEBI" id="CHEBI:60240"/>
    </ligand>
</feature>
<sequence>MRILLSNDDGIHAPGIQTLAKALREFADVQVVAPDRNRSGASNSLTLESSLRTFTFDNGDIAVQMGTPTDCVYLGVNALMRPRPDIVVSGINAGPNLGDDVIYSGTVAAAMEGRHLGFPALAVSLNGYQHYDTAAAVTCALLRGLSREPLRTGRILNVNVPDLPLAQIKGIRVTRCGSRHPADKVIPQEDPRGNTLYWIGPPGDKYDAGPDTDFAAVDEGYVSVTPLHVDLTAHSAHDVVSDWLDSVGVGTQW</sequence>
<reference key="1">
    <citation type="submission" date="2007-11" db="EMBL/GenBank/DDBJ databases">
        <authorList>
            <consortium name="The Salmonella enterica serovar Arizonae Genome Sequencing Project"/>
            <person name="McClelland M."/>
            <person name="Sanderson E.K."/>
            <person name="Porwollik S."/>
            <person name="Spieth J."/>
            <person name="Clifton W.S."/>
            <person name="Fulton R."/>
            <person name="Chunyan W."/>
            <person name="Wollam A."/>
            <person name="Shah N."/>
            <person name="Pepin K."/>
            <person name="Bhonagiri V."/>
            <person name="Nash W."/>
            <person name="Johnson M."/>
            <person name="Thiruvilangam P."/>
            <person name="Wilson R."/>
        </authorList>
    </citation>
    <scope>NUCLEOTIDE SEQUENCE [LARGE SCALE GENOMIC DNA]</scope>
    <source>
        <strain>ATCC BAA-731 / CDC346-86 / RSK2980</strain>
    </source>
</reference>
<name>SURE_SALAR</name>
<keyword id="KW-0963">Cytoplasm</keyword>
<keyword id="KW-0378">Hydrolase</keyword>
<keyword id="KW-0479">Metal-binding</keyword>
<keyword id="KW-0547">Nucleotide-binding</keyword>
<keyword id="KW-1185">Reference proteome</keyword>
<protein>
    <recommendedName>
        <fullName evidence="1">5'/3'-nucleotidase SurE</fullName>
        <ecNumber evidence="1">3.1.3.5</ecNumber>
        <ecNumber evidence="1">3.1.3.6</ecNumber>
    </recommendedName>
    <alternativeName>
        <fullName evidence="1">Exopolyphosphatase</fullName>
        <ecNumber evidence="1">3.6.1.11</ecNumber>
    </alternativeName>
    <alternativeName>
        <fullName evidence="1">Nucleoside monophosphate phosphohydrolase</fullName>
    </alternativeName>
</protein>
<dbReference type="EC" id="3.1.3.5" evidence="1"/>
<dbReference type="EC" id="3.1.3.6" evidence="1"/>
<dbReference type="EC" id="3.6.1.11" evidence="1"/>
<dbReference type="EMBL" id="CP000880">
    <property type="protein sequence ID" value="ABX19983.1"/>
    <property type="molecule type" value="Genomic_DNA"/>
</dbReference>
<dbReference type="SMR" id="A9MF31"/>
<dbReference type="STRING" id="41514.SARI_00029"/>
<dbReference type="KEGG" id="ses:SARI_00029"/>
<dbReference type="HOGENOM" id="CLU_045192_1_2_6"/>
<dbReference type="Proteomes" id="UP000002084">
    <property type="component" value="Chromosome"/>
</dbReference>
<dbReference type="GO" id="GO:0005737">
    <property type="term" value="C:cytoplasm"/>
    <property type="evidence" value="ECO:0007669"/>
    <property type="project" value="UniProtKB-SubCell"/>
</dbReference>
<dbReference type="GO" id="GO:0008254">
    <property type="term" value="F:3'-nucleotidase activity"/>
    <property type="evidence" value="ECO:0007669"/>
    <property type="project" value="UniProtKB-UniRule"/>
</dbReference>
<dbReference type="GO" id="GO:0008253">
    <property type="term" value="F:5'-nucleotidase activity"/>
    <property type="evidence" value="ECO:0007669"/>
    <property type="project" value="UniProtKB-UniRule"/>
</dbReference>
<dbReference type="GO" id="GO:0004309">
    <property type="term" value="F:exopolyphosphatase activity"/>
    <property type="evidence" value="ECO:0007669"/>
    <property type="project" value="UniProtKB-UniRule"/>
</dbReference>
<dbReference type="GO" id="GO:0046872">
    <property type="term" value="F:metal ion binding"/>
    <property type="evidence" value="ECO:0007669"/>
    <property type="project" value="UniProtKB-UniRule"/>
</dbReference>
<dbReference type="GO" id="GO:0000166">
    <property type="term" value="F:nucleotide binding"/>
    <property type="evidence" value="ECO:0007669"/>
    <property type="project" value="UniProtKB-KW"/>
</dbReference>
<dbReference type="FunFam" id="3.40.1210.10:FF:000001">
    <property type="entry name" value="5'/3'-nucleotidase SurE"/>
    <property type="match status" value="1"/>
</dbReference>
<dbReference type="Gene3D" id="3.40.1210.10">
    <property type="entry name" value="Survival protein SurE-like phosphatase/nucleotidase"/>
    <property type="match status" value="1"/>
</dbReference>
<dbReference type="HAMAP" id="MF_00060">
    <property type="entry name" value="SurE"/>
    <property type="match status" value="1"/>
</dbReference>
<dbReference type="InterPro" id="IPR030048">
    <property type="entry name" value="SurE"/>
</dbReference>
<dbReference type="InterPro" id="IPR002828">
    <property type="entry name" value="SurE-like_Pase/nucleotidase"/>
</dbReference>
<dbReference type="InterPro" id="IPR036523">
    <property type="entry name" value="SurE-like_sf"/>
</dbReference>
<dbReference type="NCBIfam" id="NF001488">
    <property type="entry name" value="PRK00346.1-1"/>
    <property type="match status" value="1"/>
</dbReference>
<dbReference type="NCBIfam" id="NF001489">
    <property type="entry name" value="PRK00346.1-3"/>
    <property type="match status" value="1"/>
</dbReference>
<dbReference type="NCBIfam" id="NF001490">
    <property type="entry name" value="PRK00346.1-4"/>
    <property type="match status" value="1"/>
</dbReference>
<dbReference type="NCBIfam" id="TIGR00087">
    <property type="entry name" value="surE"/>
    <property type="match status" value="1"/>
</dbReference>
<dbReference type="PANTHER" id="PTHR30457">
    <property type="entry name" value="5'-NUCLEOTIDASE SURE"/>
    <property type="match status" value="1"/>
</dbReference>
<dbReference type="PANTHER" id="PTHR30457:SF12">
    <property type="entry name" value="5'_3'-NUCLEOTIDASE SURE"/>
    <property type="match status" value="1"/>
</dbReference>
<dbReference type="Pfam" id="PF01975">
    <property type="entry name" value="SurE"/>
    <property type="match status" value="1"/>
</dbReference>
<dbReference type="SUPFAM" id="SSF64167">
    <property type="entry name" value="SurE-like"/>
    <property type="match status" value="1"/>
</dbReference>
<organism>
    <name type="scientific">Salmonella arizonae (strain ATCC BAA-731 / CDC346-86 / RSK2980)</name>
    <dbReference type="NCBI Taxonomy" id="41514"/>
    <lineage>
        <taxon>Bacteria</taxon>
        <taxon>Pseudomonadati</taxon>
        <taxon>Pseudomonadota</taxon>
        <taxon>Gammaproteobacteria</taxon>
        <taxon>Enterobacterales</taxon>
        <taxon>Enterobacteriaceae</taxon>
        <taxon>Salmonella</taxon>
    </lineage>
</organism>